<accession>Q5H715</accession>
<comment type="function">
    <text evidence="1">Plays an essential role in the initiation and regulation of chromosomal replication. ATP-DnaA binds to the origin of replication (oriC) to initiate formation of the DNA replication initiation complex once per cell cycle. Binds the DnaA box (a 9 base pair repeat at the origin) and separates the double-stranded (ds)DNA. Forms a right-handed helical filament on oriC DNA; dsDNA binds to the exterior of the filament while single-stranded (ss)DNA is stabiized in the filament's interior. The ATP-DnaA-oriC complex binds and stabilizes one strand of the AT-rich DNA unwinding element (DUE), permitting loading of DNA polymerase. After initiation quickly degrades to an ADP-DnaA complex that is not apt for DNA replication. Binds acidic phospholipids.</text>
</comment>
<comment type="subunit">
    <text evidence="1">Oligomerizes as a right-handed, spiral filament on DNA at oriC.</text>
</comment>
<comment type="subcellular location">
    <subcellularLocation>
        <location evidence="1">Cytoplasm</location>
    </subcellularLocation>
</comment>
<comment type="domain">
    <text evidence="1">Domain I is involved in oligomerization and binding regulators, domain II is flexibile and of varying length in different bacteria, domain III forms the AAA+ region, while domain IV binds dsDNA.</text>
</comment>
<comment type="similarity">
    <text evidence="1">Belongs to the DnaA family.</text>
</comment>
<sequence length="443" mass="49644">MMDAWPRCLERLEAEFPPEDVHTWLKPLQAEDRGDSIVLYAPNAFIVDQVRERYLPRIRELLAYFAGNGEVALAVGSRPRAPEPAPAPVAATIAPQAAPIAPFAGNLDSHYTFANFVEGRSNQLGLAAAIQAAQKPGDRAHNPLLLYGSTGLGKTHLMFAAGNALRQAKPAAKVMYLRSEQFFSAMIRALQDKAMDQFKRQFQQIDALLIDDIQFFAGKDRTQEEFFHTFNALFDGRQQIILTCDRYPREVEGLEPRLKSRLAWGLSVAIDPPDFETRAAIVLAKARERGAEIPDDVAFLIAKKMRSNVRDLEGALNTLVARANFTGRSITVEFAQETLRDLLRAQQQAIGIPNIQKTVADYYGLQMKDLLSKRRTRSLARPRQVAMALAKELTEHSLPEIGDAFAGRDHTTVLHACRQIRTLMEADGKLREDWEKLIRKLSE</sequence>
<feature type="chain" id="PRO_0000114307" description="Chromosomal replication initiator protein DnaA">
    <location>
        <begin position="1"/>
        <end position="443"/>
    </location>
</feature>
<feature type="region of interest" description="Domain I, interacts with DnaA modulators" evidence="1">
    <location>
        <begin position="1"/>
        <end position="76"/>
    </location>
</feature>
<feature type="region of interest" description="Domain II" evidence="1">
    <location>
        <begin position="76"/>
        <end position="105"/>
    </location>
</feature>
<feature type="region of interest" description="Domain III, AAA+ region" evidence="1">
    <location>
        <begin position="106"/>
        <end position="323"/>
    </location>
</feature>
<feature type="region of interest" description="Domain IV, binds dsDNA" evidence="1">
    <location>
        <begin position="324"/>
        <end position="443"/>
    </location>
</feature>
<feature type="binding site" evidence="1">
    <location>
        <position position="151"/>
    </location>
    <ligand>
        <name>ATP</name>
        <dbReference type="ChEBI" id="CHEBI:30616"/>
    </ligand>
</feature>
<feature type="binding site" evidence="1">
    <location>
        <position position="153"/>
    </location>
    <ligand>
        <name>ATP</name>
        <dbReference type="ChEBI" id="CHEBI:30616"/>
    </ligand>
</feature>
<feature type="binding site" evidence="1">
    <location>
        <position position="154"/>
    </location>
    <ligand>
        <name>ATP</name>
        <dbReference type="ChEBI" id="CHEBI:30616"/>
    </ligand>
</feature>
<feature type="binding site" evidence="1">
    <location>
        <position position="155"/>
    </location>
    <ligand>
        <name>ATP</name>
        <dbReference type="ChEBI" id="CHEBI:30616"/>
    </ligand>
</feature>
<dbReference type="EMBL" id="AE013598">
    <property type="protein sequence ID" value="AAW73255.1"/>
    <property type="molecule type" value="Genomic_DNA"/>
</dbReference>
<dbReference type="SMR" id="Q5H715"/>
<dbReference type="STRING" id="291331.XOO0001"/>
<dbReference type="KEGG" id="xoo:XOO0001"/>
<dbReference type="HOGENOM" id="CLU_026910_0_1_6"/>
<dbReference type="Proteomes" id="UP000006735">
    <property type="component" value="Chromosome"/>
</dbReference>
<dbReference type="GO" id="GO:0005737">
    <property type="term" value="C:cytoplasm"/>
    <property type="evidence" value="ECO:0007669"/>
    <property type="project" value="UniProtKB-SubCell"/>
</dbReference>
<dbReference type="GO" id="GO:0005886">
    <property type="term" value="C:plasma membrane"/>
    <property type="evidence" value="ECO:0007669"/>
    <property type="project" value="TreeGrafter"/>
</dbReference>
<dbReference type="GO" id="GO:0005524">
    <property type="term" value="F:ATP binding"/>
    <property type="evidence" value="ECO:0007669"/>
    <property type="project" value="UniProtKB-UniRule"/>
</dbReference>
<dbReference type="GO" id="GO:0016887">
    <property type="term" value="F:ATP hydrolysis activity"/>
    <property type="evidence" value="ECO:0007669"/>
    <property type="project" value="InterPro"/>
</dbReference>
<dbReference type="GO" id="GO:0003688">
    <property type="term" value="F:DNA replication origin binding"/>
    <property type="evidence" value="ECO:0007669"/>
    <property type="project" value="UniProtKB-UniRule"/>
</dbReference>
<dbReference type="GO" id="GO:0008289">
    <property type="term" value="F:lipid binding"/>
    <property type="evidence" value="ECO:0007669"/>
    <property type="project" value="UniProtKB-KW"/>
</dbReference>
<dbReference type="GO" id="GO:0006270">
    <property type="term" value="P:DNA replication initiation"/>
    <property type="evidence" value="ECO:0007669"/>
    <property type="project" value="UniProtKB-UniRule"/>
</dbReference>
<dbReference type="GO" id="GO:0006275">
    <property type="term" value="P:regulation of DNA replication"/>
    <property type="evidence" value="ECO:0007669"/>
    <property type="project" value="UniProtKB-UniRule"/>
</dbReference>
<dbReference type="CDD" id="cd00009">
    <property type="entry name" value="AAA"/>
    <property type="match status" value="1"/>
</dbReference>
<dbReference type="CDD" id="cd06571">
    <property type="entry name" value="Bac_DnaA_C"/>
    <property type="match status" value="1"/>
</dbReference>
<dbReference type="FunFam" id="1.10.1750.10:FF:000001">
    <property type="entry name" value="Chromosomal replication initiator protein DnaA"/>
    <property type="match status" value="1"/>
</dbReference>
<dbReference type="FunFam" id="1.10.8.60:FF:000003">
    <property type="entry name" value="Chromosomal replication initiator protein DnaA"/>
    <property type="match status" value="1"/>
</dbReference>
<dbReference type="FunFam" id="3.40.50.300:FF:000103">
    <property type="entry name" value="Chromosomal replication initiator protein DnaA"/>
    <property type="match status" value="1"/>
</dbReference>
<dbReference type="Gene3D" id="1.10.1750.10">
    <property type="match status" value="1"/>
</dbReference>
<dbReference type="Gene3D" id="1.10.8.60">
    <property type="match status" value="1"/>
</dbReference>
<dbReference type="Gene3D" id="3.30.300.180">
    <property type="match status" value="1"/>
</dbReference>
<dbReference type="Gene3D" id="3.40.50.300">
    <property type="entry name" value="P-loop containing nucleotide triphosphate hydrolases"/>
    <property type="match status" value="1"/>
</dbReference>
<dbReference type="HAMAP" id="MF_00377">
    <property type="entry name" value="DnaA_bact"/>
    <property type="match status" value="1"/>
</dbReference>
<dbReference type="InterPro" id="IPR003593">
    <property type="entry name" value="AAA+_ATPase"/>
</dbReference>
<dbReference type="InterPro" id="IPR001957">
    <property type="entry name" value="Chromosome_initiator_DnaA"/>
</dbReference>
<dbReference type="InterPro" id="IPR020591">
    <property type="entry name" value="Chromosome_initiator_DnaA-like"/>
</dbReference>
<dbReference type="InterPro" id="IPR018312">
    <property type="entry name" value="Chromosome_initiator_DnaA_CS"/>
</dbReference>
<dbReference type="InterPro" id="IPR013159">
    <property type="entry name" value="DnaA_C"/>
</dbReference>
<dbReference type="InterPro" id="IPR013317">
    <property type="entry name" value="DnaA_dom"/>
</dbReference>
<dbReference type="InterPro" id="IPR024633">
    <property type="entry name" value="DnaA_N_dom"/>
</dbReference>
<dbReference type="InterPro" id="IPR038454">
    <property type="entry name" value="DnaA_N_sf"/>
</dbReference>
<dbReference type="InterPro" id="IPR027417">
    <property type="entry name" value="P-loop_NTPase"/>
</dbReference>
<dbReference type="InterPro" id="IPR010921">
    <property type="entry name" value="Trp_repressor/repl_initiator"/>
</dbReference>
<dbReference type="NCBIfam" id="TIGR00362">
    <property type="entry name" value="DnaA"/>
    <property type="match status" value="1"/>
</dbReference>
<dbReference type="PANTHER" id="PTHR30050">
    <property type="entry name" value="CHROMOSOMAL REPLICATION INITIATOR PROTEIN DNAA"/>
    <property type="match status" value="1"/>
</dbReference>
<dbReference type="PANTHER" id="PTHR30050:SF2">
    <property type="entry name" value="CHROMOSOMAL REPLICATION INITIATOR PROTEIN DNAA"/>
    <property type="match status" value="1"/>
</dbReference>
<dbReference type="Pfam" id="PF00308">
    <property type="entry name" value="Bac_DnaA"/>
    <property type="match status" value="1"/>
</dbReference>
<dbReference type="Pfam" id="PF08299">
    <property type="entry name" value="Bac_DnaA_C"/>
    <property type="match status" value="1"/>
</dbReference>
<dbReference type="Pfam" id="PF11638">
    <property type="entry name" value="DnaA_N"/>
    <property type="match status" value="1"/>
</dbReference>
<dbReference type="PRINTS" id="PR00051">
    <property type="entry name" value="DNAA"/>
</dbReference>
<dbReference type="SMART" id="SM00382">
    <property type="entry name" value="AAA"/>
    <property type="match status" value="1"/>
</dbReference>
<dbReference type="SMART" id="SM00760">
    <property type="entry name" value="Bac_DnaA_C"/>
    <property type="match status" value="1"/>
</dbReference>
<dbReference type="SUPFAM" id="SSF52540">
    <property type="entry name" value="P-loop containing nucleoside triphosphate hydrolases"/>
    <property type="match status" value="1"/>
</dbReference>
<dbReference type="SUPFAM" id="SSF48295">
    <property type="entry name" value="TrpR-like"/>
    <property type="match status" value="1"/>
</dbReference>
<dbReference type="PROSITE" id="PS01008">
    <property type="entry name" value="DNAA"/>
    <property type="match status" value="1"/>
</dbReference>
<proteinExistence type="inferred from homology"/>
<evidence type="ECO:0000255" key="1">
    <source>
        <dbReference type="HAMAP-Rule" id="MF_00377"/>
    </source>
</evidence>
<name>DNAA_XANOR</name>
<organism>
    <name type="scientific">Xanthomonas oryzae pv. oryzae (strain KACC10331 / KXO85)</name>
    <dbReference type="NCBI Taxonomy" id="291331"/>
    <lineage>
        <taxon>Bacteria</taxon>
        <taxon>Pseudomonadati</taxon>
        <taxon>Pseudomonadota</taxon>
        <taxon>Gammaproteobacteria</taxon>
        <taxon>Lysobacterales</taxon>
        <taxon>Lysobacteraceae</taxon>
        <taxon>Xanthomonas</taxon>
    </lineage>
</organism>
<gene>
    <name evidence="1" type="primary">dnaA</name>
    <name type="ordered locus">XOO0001</name>
</gene>
<keyword id="KW-0067">ATP-binding</keyword>
<keyword id="KW-0963">Cytoplasm</keyword>
<keyword id="KW-0235">DNA replication</keyword>
<keyword id="KW-0238">DNA-binding</keyword>
<keyword id="KW-0446">Lipid-binding</keyword>
<keyword id="KW-0547">Nucleotide-binding</keyword>
<keyword id="KW-1185">Reference proteome</keyword>
<protein>
    <recommendedName>
        <fullName evidence="1">Chromosomal replication initiator protein DnaA</fullName>
    </recommendedName>
</protein>
<reference key="1">
    <citation type="journal article" date="2005" name="Nucleic Acids Res.">
        <title>The genome sequence of Xanthomonas oryzae pathovar oryzae KACC10331, the bacterial blight pathogen of rice.</title>
        <authorList>
            <person name="Lee B.-M."/>
            <person name="Park Y.-J."/>
            <person name="Park D.-S."/>
            <person name="Kang H.-W."/>
            <person name="Kim J.-G."/>
            <person name="Song E.-S."/>
            <person name="Park I.-C."/>
            <person name="Yoon U.-H."/>
            <person name="Hahn J.-H."/>
            <person name="Koo B.-S."/>
            <person name="Lee G.-B."/>
            <person name="Kim H."/>
            <person name="Park H.-S."/>
            <person name="Yoon K.-O."/>
            <person name="Kim J.-H."/>
            <person name="Jung C.-H."/>
            <person name="Koh N.-H."/>
            <person name="Seo J.-S."/>
            <person name="Go S.-J."/>
        </authorList>
    </citation>
    <scope>NUCLEOTIDE SEQUENCE [LARGE SCALE GENOMIC DNA]</scope>
    <source>
        <strain>KACC10331 / KXO85</strain>
    </source>
</reference>